<feature type="chain" id="PRO_0000250347" description="UPF0316 protein Dde_2502">
    <location>
        <begin position="1"/>
        <end position="169"/>
    </location>
</feature>
<feature type="transmembrane region" description="Helical" evidence="1">
    <location>
        <begin position="1"/>
        <end position="21"/>
    </location>
</feature>
<feature type="transmembrane region" description="Helical" evidence="1">
    <location>
        <begin position="38"/>
        <end position="58"/>
    </location>
</feature>
<feature type="transmembrane region" description="Helical" evidence="1">
    <location>
        <begin position="68"/>
        <end position="88"/>
    </location>
</feature>
<reference key="1">
    <citation type="journal article" date="2011" name="J. Bacteriol.">
        <title>Complete genome sequence and updated annotation of Desulfovibrio alaskensis G20.</title>
        <authorList>
            <person name="Hauser L.J."/>
            <person name="Land M.L."/>
            <person name="Brown S.D."/>
            <person name="Larimer F."/>
            <person name="Keller K.L."/>
            <person name="Rapp-Giles B.J."/>
            <person name="Price M.N."/>
            <person name="Lin M."/>
            <person name="Bruce D.C."/>
            <person name="Detter J.C."/>
            <person name="Tapia R."/>
            <person name="Han C.S."/>
            <person name="Goodwin L.A."/>
            <person name="Cheng J.F."/>
            <person name="Pitluck S."/>
            <person name="Copeland A."/>
            <person name="Lucas S."/>
            <person name="Nolan M."/>
            <person name="Lapidus A.L."/>
            <person name="Palumbo A.V."/>
            <person name="Wall J.D."/>
        </authorList>
    </citation>
    <scope>NUCLEOTIDE SEQUENCE [LARGE SCALE GENOMIC DNA]</scope>
    <source>
        <strain>ATCC BAA-1058 / DSM 17464 / G20</strain>
    </source>
</reference>
<dbReference type="EMBL" id="CP000112">
    <property type="protein sequence ID" value="ABB39299.1"/>
    <property type="molecule type" value="Genomic_DNA"/>
</dbReference>
<dbReference type="RefSeq" id="WP_011368361.1">
    <property type="nucleotide sequence ID" value="NC_007519.1"/>
</dbReference>
<dbReference type="SMR" id="Q30YE7"/>
<dbReference type="KEGG" id="dde:Dde_2502"/>
<dbReference type="eggNOG" id="COG4843">
    <property type="taxonomic scope" value="Bacteria"/>
</dbReference>
<dbReference type="HOGENOM" id="CLU_106166_0_0_7"/>
<dbReference type="Proteomes" id="UP000002710">
    <property type="component" value="Chromosome"/>
</dbReference>
<dbReference type="GO" id="GO:0005886">
    <property type="term" value="C:plasma membrane"/>
    <property type="evidence" value="ECO:0007669"/>
    <property type="project" value="UniProtKB-SubCell"/>
</dbReference>
<dbReference type="CDD" id="cd16381">
    <property type="entry name" value="YitT_C_like_1"/>
    <property type="match status" value="1"/>
</dbReference>
<dbReference type="HAMAP" id="MF_01515">
    <property type="entry name" value="UPF0316"/>
    <property type="match status" value="1"/>
</dbReference>
<dbReference type="InterPro" id="IPR019264">
    <property type="entry name" value="DUF2179"/>
</dbReference>
<dbReference type="InterPro" id="IPR044035">
    <property type="entry name" value="DUF5698"/>
</dbReference>
<dbReference type="InterPro" id="IPR022930">
    <property type="entry name" value="UPF0316"/>
</dbReference>
<dbReference type="NCBIfam" id="NF003191">
    <property type="entry name" value="PRK04164.1-2"/>
    <property type="match status" value="1"/>
</dbReference>
<dbReference type="PANTHER" id="PTHR40060">
    <property type="entry name" value="UPF0316 PROTEIN YEBE"/>
    <property type="match status" value="1"/>
</dbReference>
<dbReference type="PANTHER" id="PTHR40060:SF1">
    <property type="entry name" value="UPF0316 PROTEIN YEBE"/>
    <property type="match status" value="1"/>
</dbReference>
<dbReference type="Pfam" id="PF10035">
    <property type="entry name" value="DUF2179"/>
    <property type="match status" value="1"/>
</dbReference>
<dbReference type="Pfam" id="PF18955">
    <property type="entry name" value="DUF5698"/>
    <property type="match status" value="1"/>
</dbReference>
<gene>
    <name type="ordered locus">Dde_2502</name>
</gene>
<name>Y2502_OLEA2</name>
<organism>
    <name type="scientific">Oleidesulfovibrio alaskensis (strain ATCC BAA-1058 / DSM 17464 / G20)</name>
    <name type="common">Desulfovibrio alaskensis</name>
    <dbReference type="NCBI Taxonomy" id="207559"/>
    <lineage>
        <taxon>Bacteria</taxon>
        <taxon>Pseudomonadati</taxon>
        <taxon>Thermodesulfobacteriota</taxon>
        <taxon>Desulfovibrionia</taxon>
        <taxon>Desulfovibrionales</taxon>
        <taxon>Desulfovibrionaceae</taxon>
        <taxon>Oleidesulfovibrio</taxon>
    </lineage>
</organism>
<sequence>MITAASLLTALAVFIARLCDVCLGTIRHVMIIRGRRLLAFSVAFFEAVIWVYAVSRVIGAVSDPVTSLAFALGFASGTYAGITLEGVFKIGEQVVRVFTREGGPVACTLRDAGFRVTVFDGQGRDGVVNLLFVQVRRRQAGEVARIARNVDPECYMVVDDIRKTYTVGG</sequence>
<keyword id="KW-1003">Cell membrane</keyword>
<keyword id="KW-0472">Membrane</keyword>
<keyword id="KW-1185">Reference proteome</keyword>
<keyword id="KW-0812">Transmembrane</keyword>
<keyword id="KW-1133">Transmembrane helix</keyword>
<protein>
    <recommendedName>
        <fullName evidence="1">UPF0316 protein Dde_2502</fullName>
    </recommendedName>
</protein>
<evidence type="ECO:0000255" key="1">
    <source>
        <dbReference type="HAMAP-Rule" id="MF_01515"/>
    </source>
</evidence>
<comment type="subcellular location">
    <subcellularLocation>
        <location evidence="1">Cell membrane</location>
        <topology evidence="1">Multi-pass membrane protein</topology>
    </subcellularLocation>
</comment>
<comment type="similarity">
    <text evidence="1">Belongs to the UPF0316 family.</text>
</comment>
<proteinExistence type="inferred from homology"/>
<accession>Q30YE7</accession>